<gene>
    <name type="primary">Tmprss11g</name>
    <name type="synonym">Desc4</name>
</gene>
<sequence length="417" mass="46614">MYQPGILVRRKRVWKPWTVALITVALLLALAVLIGLLVYFLVYDEKTHYYQASFWIPSINYSSDLSKEQSKFRTGLKQKISNEIDVIFQRSSLKHHYVKSQVVNFRPSNDGVKADVLIKFQIPRKNAGTLKRQADNILQEKLQSSQSILKRDASLPYLREMNAAQAEHILNSDCGSGMEYPPIARIADGKPADKASWPWQSSLQVEGIHLCGASLIGSQWLVTSAHCFDNYKNPKLWTVSFGRTLSSPLTTRKVESIIVHENYASHKHDDDIAVVKLSSPVLFSENLHRVCLPDATFQVLPKSKVFVTGWGALKANGPFPNSLQEVEIEIISNDVCNQVNVYGGAISSGMICAGFLTGKLDACEGDSGGPLVISDNRNKWYLLGIVSWGIDCGKENKPGIYTRVTHYRDWIKSKTSI</sequence>
<evidence type="ECO:0000250" key="1"/>
<evidence type="ECO:0000250" key="2">
    <source>
        <dbReference type="UniProtKB" id="P10144"/>
    </source>
</evidence>
<evidence type="ECO:0000250" key="3">
    <source>
        <dbReference type="UniProtKB" id="P49863"/>
    </source>
</evidence>
<evidence type="ECO:0000255" key="4"/>
<evidence type="ECO:0000255" key="5">
    <source>
        <dbReference type="PROSITE-ProRule" id="PRU00188"/>
    </source>
</evidence>
<evidence type="ECO:0000255" key="6">
    <source>
        <dbReference type="PROSITE-ProRule" id="PRU00274"/>
    </source>
</evidence>
<evidence type="ECO:0000305" key="7"/>
<protein>
    <recommendedName>
        <fullName>Transmembrane protease serine 11G</fullName>
        <ecNumber>3.4.21.-</ecNumber>
    </recommendedName>
    <alternativeName>
        <fullName>Serine protease DESC4</fullName>
    </alternativeName>
    <component>
        <recommendedName>
            <fullName>Transmembrane protease serine 11G non-catalytic chain</fullName>
        </recommendedName>
    </component>
    <component>
        <recommendedName>
            <fullName>Transmembrane protease serine 11G catalytic chain</fullName>
        </recommendedName>
    </component>
</protein>
<keyword id="KW-1015">Disulfide bond</keyword>
<keyword id="KW-0325">Glycoprotein</keyword>
<keyword id="KW-0378">Hydrolase</keyword>
<keyword id="KW-0472">Membrane</keyword>
<keyword id="KW-0645">Protease</keyword>
<keyword id="KW-1185">Reference proteome</keyword>
<keyword id="KW-0720">Serine protease</keyword>
<keyword id="KW-0735">Signal-anchor</keyword>
<keyword id="KW-0812">Transmembrane</keyword>
<keyword id="KW-1133">Transmembrane helix</keyword>
<keyword id="KW-0865">Zymogen</keyword>
<proteinExistence type="evidence at transcript level"/>
<name>TM11G_MOUSE</name>
<reference key="1">
    <citation type="journal article" date="2005" name="Science">
        <title>The transcriptional landscape of the mammalian genome.</title>
        <authorList>
            <person name="Carninci P."/>
            <person name="Kasukawa T."/>
            <person name="Katayama S."/>
            <person name="Gough J."/>
            <person name="Frith M.C."/>
            <person name="Maeda N."/>
            <person name="Oyama R."/>
            <person name="Ravasi T."/>
            <person name="Lenhard B."/>
            <person name="Wells C."/>
            <person name="Kodzius R."/>
            <person name="Shimokawa K."/>
            <person name="Bajic V.B."/>
            <person name="Brenner S.E."/>
            <person name="Batalov S."/>
            <person name="Forrest A.R."/>
            <person name="Zavolan M."/>
            <person name="Davis M.J."/>
            <person name="Wilming L.G."/>
            <person name="Aidinis V."/>
            <person name="Allen J.E."/>
            <person name="Ambesi-Impiombato A."/>
            <person name="Apweiler R."/>
            <person name="Aturaliya R.N."/>
            <person name="Bailey T.L."/>
            <person name="Bansal M."/>
            <person name="Baxter L."/>
            <person name="Beisel K.W."/>
            <person name="Bersano T."/>
            <person name="Bono H."/>
            <person name="Chalk A.M."/>
            <person name="Chiu K.P."/>
            <person name="Choudhary V."/>
            <person name="Christoffels A."/>
            <person name="Clutterbuck D.R."/>
            <person name="Crowe M.L."/>
            <person name="Dalla E."/>
            <person name="Dalrymple B.P."/>
            <person name="de Bono B."/>
            <person name="Della Gatta G."/>
            <person name="di Bernardo D."/>
            <person name="Down T."/>
            <person name="Engstrom P."/>
            <person name="Fagiolini M."/>
            <person name="Faulkner G."/>
            <person name="Fletcher C.F."/>
            <person name="Fukushima T."/>
            <person name="Furuno M."/>
            <person name="Futaki S."/>
            <person name="Gariboldi M."/>
            <person name="Georgii-Hemming P."/>
            <person name="Gingeras T.R."/>
            <person name="Gojobori T."/>
            <person name="Green R.E."/>
            <person name="Gustincich S."/>
            <person name="Harbers M."/>
            <person name="Hayashi Y."/>
            <person name="Hensch T.K."/>
            <person name="Hirokawa N."/>
            <person name="Hill D."/>
            <person name="Huminiecki L."/>
            <person name="Iacono M."/>
            <person name="Ikeo K."/>
            <person name="Iwama A."/>
            <person name="Ishikawa T."/>
            <person name="Jakt M."/>
            <person name="Kanapin A."/>
            <person name="Katoh M."/>
            <person name="Kawasawa Y."/>
            <person name="Kelso J."/>
            <person name="Kitamura H."/>
            <person name="Kitano H."/>
            <person name="Kollias G."/>
            <person name="Krishnan S.P."/>
            <person name="Kruger A."/>
            <person name="Kummerfeld S.K."/>
            <person name="Kurochkin I.V."/>
            <person name="Lareau L.F."/>
            <person name="Lazarevic D."/>
            <person name="Lipovich L."/>
            <person name="Liu J."/>
            <person name="Liuni S."/>
            <person name="McWilliam S."/>
            <person name="Madan Babu M."/>
            <person name="Madera M."/>
            <person name="Marchionni L."/>
            <person name="Matsuda H."/>
            <person name="Matsuzawa S."/>
            <person name="Miki H."/>
            <person name="Mignone F."/>
            <person name="Miyake S."/>
            <person name="Morris K."/>
            <person name="Mottagui-Tabar S."/>
            <person name="Mulder N."/>
            <person name="Nakano N."/>
            <person name="Nakauchi H."/>
            <person name="Ng P."/>
            <person name="Nilsson R."/>
            <person name="Nishiguchi S."/>
            <person name="Nishikawa S."/>
            <person name="Nori F."/>
            <person name="Ohara O."/>
            <person name="Okazaki Y."/>
            <person name="Orlando V."/>
            <person name="Pang K.C."/>
            <person name="Pavan W.J."/>
            <person name="Pavesi G."/>
            <person name="Pesole G."/>
            <person name="Petrovsky N."/>
            <person name="Piazza S."/>
            <person name="Reed J."/>
            <person name="Reid J.F."/>
            <person name="Ring B.Z."/>
            <person name="Ringwald M."/>
            <person name="Rost B."/>
            <person name="Ruan Y."/>
            <person name="Salzberg S.L."/>
            <person name="Sandelin A."/>
            <person name="Schneider C."/>
            <person name="Schoenbach C."/>
            <person name="Sekiguchi K."/>
            <person name="Semple C.A."/>
            <person name="Seno S."/>
            <person name="Sessa L."/>
            <person name="Sheng Y."/>
            <person name="Shibata Y."/>
            <person name="Shimada H."/>
            <person name="Shimada K."/>
            <person name="Silva D."/>
            <person name="Sinclair B."/>
            <person name="Sperling S."/>
            <person name="Stupka E."/>
            <person name="Sugiura K."/>
            <person name="Sultana R."/>
            <person name="Takenaka Y."/>
            <person name="Taki K."/>
            <person name="Tammoja K."/>
            <person name="Tan S.L."/>
            <person name="Tang S."/>
            <person name="Taylor M.S."/>
            <person name="Tegner J."/>
            <person name="Teichmann S.A."/>
            <person name="Ueda H.R."/>
            <person name="van Nimwegen E."/>
            <person name="Verardo R."/>
            <person name="Wei C.L."/>
            <person name="Yagi K."/>
            <person name="Yamanishi H."/>
            <person name="Zabarovsky E."/>
            <person name="Zhu S."/>
            <person name="Zimmer A."/>
            <person name="Hide W."/>
            <person name="Bult C."/>
            <person name="Grimmond S.M."/>
            <person name="Teasdale R.D."/>
            <person name="Liu E.T."/>
            <person name="Brusic V."/>
            <person name="Quackenbush J."/>
            <person name="Wahlestedt C."/>
            <person name="Mattick J.S."/>
            <person name="Hume D.A."/>
            <person name="Kai C."/>
            <person name="Sasaki D."/>
            <person name="Tomaru Y."/>
            <person name="Fukuda S."/>
            <person name="Kanamori-Katayama M."/>
            <person name="Suzuki M."/>
            <person name="Aoki J."/>
            <person name="Arakawa T."/>
            <person name="Iida J."/>
            <person name="Imamura K."/>
            <person name="Itoh M."/>
            <person name="Kato T."/>
            <person name="Kawaji H."/>
            <person name="Kawagashira N."/>
            <person name="Kawashima T."/>
            <person name="Kojima M."/>
            <person name="Kondo S."/>
            <person name="Konno H."/>
            <person name="Nakano K."/>
            <person name="Ninomiya N."/>
            <person name="Nishio T."/>
            <person name="Okada M."/>
            <person name="Plessy C."/>
            <person name="Shibata K."/>
            <person name="Shiraki T."/>
            <person name="Suzuki S."/>
            <person name="Tagami M."/>
            <person name="Waki K."/>
            <person name="Watahiki A."/>
            <person name="Okamura-Oho Y."/>
            <person name="Suzuki H."/>
            <person name="Kawai J."/>
            <person name="Hayashizaki Y."/>
        </authorList>
    </citation>
    <scope>NUCLEOTIDE SEQUENCE [LARGE SCALE MRNA]</scope>
    <source>
        <strain>C57BL/6J</strain>
        <tissue>Vagina</tissue>
    </source>
</reference>
<reference key="2">
    <citation type="journal article" date="2009" name="PLoS Biol.">
        <title>Lineage-specific biology revealed by a finished genome assembly of the mouse.</title>
        <authorList>
            <person name="Church D.M."/>
            <person name="Goodstadt L."/>
            <person name="Hillier L.W."/>
            <person name="Zody M.C."/>
            <person name="Goldstein S."/>
            <person name="She X."/>
            <person name="Bult C.J."/>
            <person name="Agarwala R."/>
            <person name="Cherry J.L."/>
            <person name="DiCuccio M."/>
            <person name="Hlavina W."/>
            <person name="Kapustin Y."/>
            <person name="Meric P."/>
            <person name="Maglott D."/>
            <person name="Birtle Z."/>
            <person name="Marques A.C."/>
            <person name="Graves T."/>
            <person name="Zhou S."/>
            <person name="Teague B."/>
            <person name="Potamousis K."/>
            <person name="Churas C."/>
            <person name="Place M."/>
            <person name="Herschleb J."/>
            <person name="Runnheim R."/>
            <person name="Forrest D."/>
            <person name="Amos-Landgraf J."/>
            <person name="Schwartz D.C."/>
            <person name="Cheng Z."/>
            <person name="Lindblad-Toh K."/>
            <person name="Eichler E.E."/>
            <person name="Ponting C.P."/>
        </authorList>
    </citation>
    <scope>NUCLEOTIDE SEQUENCE [LARGE SCALE GENOMIC DNA]</scope>
    <source>
        <strain>C57BL/6J</strain>
    </source>
</reference>
<organism>
    <name type="scientific">Mus musculus</name>
    <name type="common">Mouse</name>
    <dbReference type="NCBI Taxonomy" id="10090"/>
    <lineage>
        <taxon>Eukaryota</taxon>
        <taxon>Metazoa</taxon>
        <taxon>Chordata</taxon>
        <taxon>Craniata</taxon>
        <taxon>Vertebrata</taxon>
        <taxon>Euteleostomi</taxon>
        <taxon>Mammalia</taxon>
        <taxon>Eutheria</taxon>
        <taxon>Euarchontoglires</taxon>
        <taxon>Glires</taxon>
        <taxon>Rodentia</taxon>
        <taxon>Myomorpha</taxon>
        <taxon>Muroidea</taxon>
        <taxon>Muridae</taxon>
        <taxon>Murinae</taxon>
        <taxon>Mus</taxon>
        <taxon>Mus</taxon>
    </lineage>
</organism>
<accession>Q8BZ10</accession>
<accession>Q8BZ04</accession>
<feature type="chain" id="PRO_0000027837" description="Transmembrane protease serine 11G non-catalytic chain" evidence="4">
    <location>
        <begin position="1"/>
        <end position="185"/>
    </location>
</feature>
<feature type="chain" id="PRO_0000027838" description="Transmembrane protease serine 11G catalytic chain" evidence="4">
    <location>
        <begin position="186"/>
        <end position="417"/>
    </location>
</feature>
<feature type="topological domain" description="Cytoplasmic" evidence="4">
    <location>
        <begin position="1"/>
        <end position="21"/>
    </location>
</feature>
<feature type="transmembrane region" description="Helical; Signal-anchor for type II membrane protein" evidence="4">
    <location>
        <begin position="22"/>
        <end position="42"/>
    </location>
</feature>
<feature type="topological domain" description="Extracellular" evidence="4">
    <location>
        <begin position="43"/>
        <end position="417"/>
    </location>
</feature>
<feature type="domain" description="SEA" evidence="5">
    <location>
        <begin position="46"/>
        <end position="165"/>
    </location>
</feature>
<feature type="domain" description="Peptidase S1" evidence="6">
    <location>
        <begin position="186"/>
        <end position="416"/>
    </location>
</feature>
<feature type="active site" description="Charge relay system" evidence="2">
    <location>
        <position position="226"/>
    </location>
</feature>
<feature type="active site" description="Charge relay system" evidence="2">
    <location>
        <position position="271"/>
    </location>
</feature>
<feature type="active site" description="Charge relay system" evidence="2">
    <location>
        <position position="367"/>
    </location>
</feature>
<feature type="glycosylation site" description="N-linked (GlcNAc...) asparagine" evidence="4">
    <location>
        <position position="60"/>
    </location>
</feature>
<feature type="disulfide bond" evidence="3 6">
    <location>
        <begin position="211"/>
        <end position="227"/>
    </location>
</feature>
<feature type="disulfide bond" evidence="3 6">
    <location>
        <begin position="336"/>
        <end position="352"/>
    </location>
</feature>
<feature type="disulfide bond" evidence="3 6">
    <location>
        <begin position="363"/>
        <end position="392"/>
    </location>
</feature>
<feature type="sequence conflict" description="In Ref. 1; BAC29657." evidence="7" ref="1">
    <original>A</original>
    <variation>V</variation>
    <location>
        <position position="52"/>
    </location>
</feature>
<dbReference type="EC" id="3.4.21.-"/>
<dbReference type="EMBL" id="AK036981">
    <property type="protein sequence ID" value="BAC29657.1"/>
    <property type="molecule type" value="mRNA"/>
</dbReference>
<dbReference type="EMBL" id="AK037029">
    <property type="protein sequence ID" value="BAC29676.1"/>
    <property type="status" value="ALT_INIT"/>
    <property type="molecule type" value="mRNA"/>
</dbReference>
<dbReference type="EMBL" id="AC103930">
    <property type="status" value="NOT_ANNOTATED_CDS"/>
    <property type="molecule type" value="Genomic_DNA"/>
</dbReference>
<dbReference type="CCDS" id="CCDS51532.1"/>
<dbReference type="RefSeq" id="NP_796136.2">
    <property type="nucleotide sequence ID" value="NM_177162.4"/>
</dbReference>
<dbReference type="SMR" id="Q8BZ10"/>
<dbReference type="FunCoup" id="Q8BZ10">
    <property type="interactions" value="217"/>
</dbReference>
<dbReference type="STRING" id="10090.ENSMUSP00000122709"/>
<dbReference type="MEROPS" id="S01.436"/>
<dbReference type="GlyCosmos" id="Q8BZ10">
    <property type="glycosylation" value="1 site, No reported glycans"/>
</dbReference>
<dbReference type="GlyGen" id="Q8BZ10">
    <property type="glycosylation" value="1 site"/>
</dbReference>
<dbReference type="PaxDb" id="10090-ENSMUSP00000122709"/>
<dbReference type="ProteomicsDB" id="259217"/>
<dbReference type="DNASU" id="320454"/>
<dbReference type="Ensembl" id="ENSMUST00000134179.8">
    <property type="protein sequence ID" value="ENSMUSP00000122709.2"/>
    <property type="gene ID" value="ENSMUSG00000079451.10"/>
</dbReference>
<dbReference type="GeneID" id="320454"/>
<dbReference type="KEGG" id="mmu:320454"/>
<dbReference type="UCSC" id="uc008xxr.2">
    <property type="organism name" value="mouse"/>
</dbReference>
<dbReference type="AGR" id="MGI:2444058"/>
<dbReference type="CTD" id="320454"/>
<dbReference type="MGI" id="MGI:2444058">
    <property type="gene designation" value="Tmprss11g"/>
</dbReference>
<dbReference type="VEuPathDB" id="HostDB:ENSMUSG00000079451"/>
<dbReference type="eggNOG" id="KOG3627">
    <property type="taxonomic scope" value="Eukaryota"/>
</dbReference>
<dbReference type="GeneTree" id="ENSGT00940000163094"/>
<dbReference type="InParanoid" id="Q8BZ10"/>
<dbReference type="OMA" id="AFDQKFY"/>
<dbReference type="OrthoDB" id="9425590at2759"/>
<dbReference type="PhylomeDB" id="Q8BZ10"/>
<dbReference type="TreeFam" id="TF351684"/>
<dbReference type="BioGRID-ORCS" id="320454">
    <property type="hits" value="2 hits in 79 CRISPR screens"/>
</dbReference>
<dbReference type="PRO" id="PR:Q8BZ10"/>
<dbReference type="Proteomes" id="UP000000589">
    <property type="component" value="Chromosome 5"/>
</dbReference>
<dbReference type="RNAct" id="Q8BZ10">
    <property type="molecule type" value="protein"/>
</dbReference>
<dbReference type="Bgee" id="ENSMUSG00000079451">
    <property type="expression patterns" value="Expressed in esophagus and 23 other cell types or tissues"/>
</dbReference>
<dbReference type="ExpressionAtlas" id="Q8BZ10">
    <property type="expression patterns" value="baseline and differential"/>
</dbReference>
<dbReference type="GO" id="GO:0005576">
    <property type="term" value="C:extracellular region"/>
    <property type="evidence" value="ECO:0007669"/>
    <property type="project" value="InterPro"/>
</dbReference>
<dbReference type="GO" id="GO:0005886">
    <property type="term" value="C:plasma membrane"/>
    <property type="evidence" value="ECO:0007669"/>
    <property type="project" value="InterPro"/>
</dbReference>
<dbReference type="GO" id="GO:0004252">
    <property type="term" value="F:serine-type endopeptidase activity"/>
    <property type="evidence" value="ECO:0007669"/>
    <property type="project" value="InterPro"/>
</dbReference>
<dbReference type="GO" id="GO:0006508">
    <property type="term" value="P:proteolysis"/>
    <property type="evidence" value="ECO:0007669"/>
    <property type="project" value="UniProtKB-KW"/>
</dbReference>
<dbReference type="CDD" id="cd00190">
    <property type="entry name" value="Tryp_SPc"/>
    <property type="match status" value="1"/>
</dbReference>
<dbReference type="FunFam" id="3.30.70.960:FF:000014">
    <property type="entry name" value="Transmembrane protease serine 11G"/>
    <property type="match status" value="1"/>
</dbReference>
<dbReference type="FunFam" id="2.40.10.10:FF:000003">
    <property type="entry name" value="Transmembrane serine protease 3"/>
    <property type="match status" value="1"/>
</dbReference>
<dbReference type="Gene3D" id="3.30.70.960">
    <property type="entry name" value="SEA domain"/>
    <property type="match status" value="1"/>
</dbReference>
<dbReference type="Gene3D" id="2.40.10.10">
    <property type="entry name" value="Trypsin-like serine proteases"/>
    <property type="match status" value="2"/>
</dbReference>
<dbReference type="InterPro" id="IPR017329">
    <property type="entry name" value="Pept_S1A_HAT/DESC1"/>
</dbReference>
<dbReference type="InterPro" id="IPR009003">
    <property type="entry name" value="Peptidase_S1_PA"/>
</dbReference>
<dbReference type="InterPro" id="IPR043504">
    <property type="entry name" value="Peptidase_S1_PA_chymotrypsin"/>
</dbReference>
<dbReference type="InterPro" id="IPR001314">
    <property type="entry name" value="Peptidase_S1A"/>
</dbReference>
<dbReference type="InterPro" id="IPR000082">
    <property type="entry name" value="SEA_dom"/>
</dbReference>
<dbReference type="InterPro" id="IPR036364">
    <property type="entry name" value="SEA_dom_sf"/>
</dbReference>
<dbReference type="InterPro" id="IPR001254">
    <property type="entry name" value="Trypsin_dom"/>
</dbReference>
<dbReference type="InterPro" id="IPR033116">
    <property type="entry name" value="TRYPSIN_SER"/>
</dbReference>
<dbReference type="PANTHER" id="PTHR24252">
    <property type="entry name" value="ACROSIN-RELATED"/>
    <property type="match status" value="1"/>
</dbReference>
<dbReference type="PANTHER" id="PTHR24252:SF7">
    <property type="entry name" value="HYALIN"/>
    <property type="match status" value="1"/>
</dbReference>
<dbReference type="Pfam" id="PF01390">
    <property type="entry name" value="SEA"/>
    <property type="match status" value="1"/>
</dbReference>
<dbReference type="Pfam" id="PF00089">
    <property type="entry name" value="Trypsin"/>
    <property type="match status" value="1"/>
</dbReference>
<dbReference type="PIRSF" id="PIRSF037941">
    <property type="entry name" value="TMPRSS11ABCDE"/>
    <property type="match status" value="1"/>
</dbReference>
<dbReference type="PRINTS" id="PR00722">
    <property type="entry name" value="CHYMOTRYPSIN"/>
</dbReference>
<dbReference type="SMART" id="SM00020">
    <property type="entry name" value="Tryp_SPc"/>
    <property type="match status" value="1"/>
</dbReference>
<dbReference type="SUPFAM" id="SSF82671">
    <property type="entry name" value="SEA domain"/>
    <property type="match status" value="1"/>
</dbReference>
<dbReference type="SUPFAM" id="SSF50494">
    <property type="entry name" value="Trypsin-like serine proteases"/>
    <property type="match status" value="1"/>
</dbReference>
<dbReference type="PROSITE" id="PS50024">
    <property type="entry name" value="SEA"/>
    <property type="match status" value="1"/>
</dbReference>
<dbReference type="PROSITE" id="PS50240">
    <property type="entry name" value="TRYPSIN_DOM"/>
    <property type="match status" value="1"/>
</dbReference>
<dbReference type="PROSITE" id="PS00135">
    <property type="entry name" value="TRYPSIN_SER"/>
    <property type="match status" value="1"/>
</dbReference>
<comment type="subcellular location">
    <subcellularLocation>
        <location evidence="1">Membrane</location>
        <topology evidence="1">Single-pass type II membrane protein</topology>
    </subcellularLocation>
</comment>
<comment type="similarity">
    <text evidence="6">Belongs to the peptidase S1 family.</text>
</comment>
<comment type="sequence caution" evidence="7">
    <conflict type="erroneous initiation">
        <sequence resource="EMBL-CDS" id="BAC29676"/>
    </conflict>
    <text>Truncated N-terminus.</text>
</comment>